<feature type="chain" id="PRO_0000088738" description="Factor V activator RVV-V alpha">
    <location>
        <begin position="1"/>
        <end position="236"/>
    </location>
</feature>
<feature type="domain" description="Peptidase S1" evidence="2">
    <location>
        <begin position="1"/>
        <end position="227"/>
    </location>
</feature>
<feature type="active site" description="Charge relay system" evidence="1">
    <location>
        <position position="43"/>
    </location>
</feature>
<feature type="active site" description="Charge relay system" evidence="1">
    <location>
        <position position="88"/>
    </location>
</feature>
<feature type="active site" description="Charge relay system" evidence="1">
    <location>
        <position position="182"/>
    </location>
</feature>
<feature type="glycosylation site" description="N-linked (GlcNAc...) asparagine" evidence="4">
    <location>
        <position position="229"/>
    </location>
</feature>
<feature type="disulfide bond" evidence="2">
    <location>
        <begin position="7"/>
        <end position="141"/>
    </location>
</feature>
<feature type="disulfide bond" evidence="2">
    <location>
        <begin position="28"/>
        <end position="44"/>
    </location>
</feature>
<feature type="disulfide bond" evidence="2">
    <location>
        <begin position="76"/>
        <end position="234"/>
    </location>
</feature>
<feature type="disulfide bond" evidence="2">
    <location>
        <begin position="120"/>
        <end position="188"/>
    </location>
</feature>
<feature type="disulfide bond" evidence="2">
    <location>
        <begin position="152"/>
        <end position="167"/>
    </location>
</feature>
<feature type="disulfide bond" evidence="2">
    <location>
        <begin position="178"/>
        <end position="203"/>
    </location>
</feature>
<reference key="1">
    <citation type="journal article" date="1988" name="J. Biol. Chem.">
        <title>The factor V-activating enzyme (RVV-V) from Russell's viper venom. Identification of isoproteins RVV-V alpha, -V beta, and -V gamma and their complete amino acid sequences.</title>
        <authorList>
            <person name="Tokunaga F."/>
            <person name="Nagasawa K."/>
            <person name="Tamura S."/>
            <person name="Miyata T."/>
            <person name="Iwanaga S."/>
            <person name="Kisiel W."/>
        </authorList>
    </citation>
    <scope>PROTEIN SEQUENCE</scope>
    <scope>FUNCTION</scope>
    <source>
        <tissue>Venom</tissue>
    </source>
</reference>
<reference key="2">
    <citation type="journal article" date="2006" name="Proteins">
        <title>Structural models of the snake venom factor V activators from Daboia russelli and Daboia lebetina.</title>
        <authorList>
            <person name="Segers K."/>
            <person name="Rosing J."/>
            <person name="Nicolaes G.A."/>
        </authorList>
    </citation>
    <scope>FUNCTION</scope>
    <scope>ACTIVITY REGULATION</scope>
    <scope>3D-STRUCTURE MODELING</scope>
    <source>
        <tissue>Venom</tissue>
    </source>
</reference>
<dbReference type="EC" id="3.4.21.95"/>
<dbReference type="PIR" id="A32121">
    <property type="entry name" value="A32121"/>
</dbReference>
<dbReference type="SMR" id="P18964"/>
<dbReference type="MEROPS" id="S01.184"/>
<dbReference type="iPTMnet" id="P18964"/>
<dbReference type="BRENDA" id="3.4.21.95">
    <property type="organism ID" value="6667"/>
</dbReference>
<dbReference type="GO" id="GO:0005576">
    <property type="term" value="C:extracellular region"/>
    <property type="evidence" value="ECO:0007669"/>
    <property type="project" value="UniProtKB-SubCell"/>
</dbReference>
<dbReference type="GO" id="GO:0030141">
    <property type="term" value="C:secretory granule"/>
    <property type="evidence" value="ECO:0007669"/>
    <property type="project" value="TreeGrafter"/>
</dbReference>
<dbReference type="GO" id="GO:0004252">
    <property type="term" value="F:serine-type endopeptidase activity"/>
    <property type="evidence" value="ECO:0007669"/>
    <property type="project" value="InterPro"/>
</dbReference>
<dbReference type="GO" id="GO:0090729">
    <property type="term" value="F:toxin activity"/>
    <property type="evidence" value="ECO:0007669"/>
    <property type="project" value="UniProtKB-KW"/>
</dbReference>
<dbReference type="GO" id="GO:0006508">
    <property type="term" value="P:proteolysis"/>
    <property type="evidence" value="ECO:0007669"/>
    <property type="project" value="UniProtKB-KW"/>
</dbReference>
<dbReference type="CDD" id="cd00190">
    <property type="entry name" value="Tryp_SPc"/>
    <property type="match status" value="1"/>
</dbReference>
<dbReference type="FunFam" id="2.40.10.10:FF:000010">
    <property type="entry name" value="Kallikrein related peptidase 11"/>
    <property type="match status" value="1"/>
</dbReference>
<dbReference type="Gene3D" id="2.40.10.10">
    <property type="entry name" value="Trypsin-like serine proteases"/>
    <property type="match status" value="2"/>
</dbReference>
<dbReference type="InterPro" id="IPR009003">
    <property type="entry name" value="Peptidase_S1_PA"/>
</dbReference>
<dbReference type="InterPro" id="IPR043504">
    <property type="entry name" value="Peptidase_S1_PA_chymotrypsin"/>
</dbReference>
<dbReference type="InterPro" id="IPR001314">
    <property type="entry name" value="Peptidase_S1A"/>
</dbReference>
<dbReference type="InterPro" id="IPR001254">
    <property type="entry name" value="Trypsin_dom"/>
</dbReference>
<dbReference type="InterPro" id="IPR018114">
    <property type="entry name" value="TRYPSIN_HIS"/>
</dbReference>
<dbReference type="InterPro" id="IPR033116">
    <property type="entry name" value="TRYPSIN_SER"/>
</dbReference>
<dbReference type="PANTHER" id="PTHR24271:SF47">
    <property type="entry name" value="KALLIKREIN-1"/>
    <property type="match status" value="1"/>
</dbReference>
<dbReference type="PANTHER" id="PTHR24271">
    <property type="entry name" value="KALLIKREIN-RELATED"/>
    <property type="match status" value="1"/>
</dbReference>
<dbReference type="Pfam" id="PF00089">
    <property type="entry name" value="Trypsin"/>
    <property type="match status" value="1"/>
</dbReference>
<dbReference type="PRINTS" id="PR00722">
    <property type="entry name" value="CHYMOTRYPSIN"/>
</dbReference>
<dbReference type="SMART" id="SM00020">
    <property type="entry name" value="Tryp_SPc"/>
    <property type="match status" value="1"/>
</dbReference>
<dbReference type="SUPFAM" id="SSF50494">
    <property type="entry name" value="Trypsin-like serine proteases"/>
    <property type="match status" value="1"/>
</dbReference>
<dbReference type="PROSITE" id="PS50240">
    <property type="entry name" value="TRYPSIN_DOM"/>
    <property type="match status" value="1"/>
</dbReference>
<dbReference type="PROSITE" id="PS00134">
    <property type="entry name" value="TRYPSIN_HIS"/>
    <property type="match status" value="1"/>
</dbReference>
<dbReference type="PROSITE" id="PS00135">
    <property type="entry name" value="TRYPSIN_SER"/>
    <property type="match status" value="1"/>
</dbReference>
<name>VSPA_DABSI</name>
<comment type="function">
    <text evidence="3 4">Venom serine protease that activates factor V (F5) in a calcium-independent manner. It cleaves the Arg(1545)-Ser(1546) linkage in the human factor V molecule. Induces the coagulation of mammalian plasma.</text>
</comment>
<comment type="catalytic activity">
    <reaction>
        <text>Fully activates human clotting factor V by a single cleavage at the 1545-Trp-Tyr-Leu-Arg-|-Ser-Asn-Asn-Gly-1552 bond. Cattle, but not rabbit, factor V is cleaved, and no other proteins of the clotting system are attacked. Esterase activity is observed on Bz-Arg-OEt and Tos-Arg-OMe, and amidase activity on Phe-pipecolyl-Arg-NHPhNO2.</text>
        <dbReference type="EC" id="3.4.21.95"/>
    </reaction>
</comment>
<comment type="activity regulation">
    <text evidence="3">Inhibited by D-Phe-Pro-Arg-chloromethyl ketone (FPRCK) (97%), PMSF (76%), and benzamidine (50%). Is not inhibited by BPTI, antithrombin and EDTA.</text>
</comment>
<comment type="subunit">
    <text>Monomer.</text>
</comment>
<comment type="subcellular location">
    <subcellularLocation>
        <location>Secreted</location>
    </subcellularLocation>
</comment>
<comment type="tissue specificity">
    <text>Expressed by the venom gland.</text>
</comment>
<comment type="miscellaneous">
    <text>There are three isoproteins of RVV-V, designated RVV-V alpha, V-beta, and V-gamma.</text>
</comment>
<comment type="miscellaneous">
    <text evidence="5">Negative results: has no proteolytic effect on factor VIII, factor XIII, fibrinogen, and prothrombin.</text>
</comment>
<comment type="similarity">
    <text evidence="2">Belongs to the peptidase S1 family. Snake venom subfamily.</text>
</comment>
<sequence>VVGGDECNINEHPFLVALYTSTSSTIHCGGALINREWVLTAAHCDRRNIRIKLGMHSKNIRNEDEQIRVPRGKYFCLNTKFPNGLDKDIMLIRLRRPVTYSTHIAPVSLPSRSRGVGSRCRIMGWGKISTTEDTYPDVPHCTNIFIVKHKWCEPLYPWVPADSRTLCAGILKGGRDTCHGDSGGPLICNGQIQGIVAGGSEPCGQHLKPAVYTKVFDYNNWIQNIIAGNRTVTCPP</sequence>
<keyword id="KW-1204">Blood coagulation cascade activating toxin</keyword>
<keyword id="KW-0903">Direct protein sequencing</keyword>
<keyword id="KW-1015">Disulfide bond</keyword>
<keyword id="KW-0325">Glycoprotein</keyword>
<keyword id="KW-1199">Hemostasis impairing toxin</keyword>
<keyword id="KW-0378">Hydrolase</keyword>
<keyword id="KW-0645">Protease</keyword>
<keyword id="KW-0964">Secreted</keyword>
<keyword id="KW-0720">Serine protease</keyword>
<keyword id="KW-0800">Toxin</keyword>
<protein>
    <recommendedName>
        <fullName>Factor V activator RVV-V alpha</fullName>
        <ecNumber>3.4.21.95</ecNumber>
    </recommendedName>
    <alternativeName>
        <fullName>Russel's viper venom FV activator alpha</fullName>
        <shortName>RVV-V alpha</shortName>
    </alternativeName>
    <alternativeName>
        <fullName>Snake venom serine protease</fullName>
        <shortName>SVSP</shortName>
    </alternativeName>
</protein>
<organism>
    <name type="scientific">Daboia siamensis</name>
    <name type="common">Eastern Russel's viper</name>
    <name type="synonym">Daboia russelii siamensis</name>
    <dbReference type="NCBI Taxonomy" id="343250"/>
    <lineage>
        <taxon>Eukaryota</taxon>
        <taxon>Metazoa</taxon>
        <taxon>Chordata</taxon>
        <taxon>Craniata</taxon>
        <taxon>Vertebrata</taxon>
        <taxon>Euteleostomi</taxon>
        <taxon>Lepidosauria</taxon>
        <taxon>Squamata</taxon>
        <taxon>Bifurcata</taxon>
        <taxon>Unidentata</taxon>
        <taxon>Episquamata</taxon>
        <taxon>Toxicofera</taxon>
        <taxon>Serpentes</taxon>
        <taxon>Colubroidea</taxon>
        <taxon>Viperidae</taxon>
        <taxon>Viperinae</taxon>
        <taxon>Daboia</taxon>
    </lineage>
</organism>
<evidence type="ECO:0000250" key="1"/>
<evidence type="ECO:0000255" key="2">
    <source>
        <dbReference type="PROSITE-ProRule" id="PRU00274"/>
    </source>
</evidence>
<evidence type="ECO:0000269" key="3">
    <source>
    </source>
</evidence>
<evidence type="ECO:0000269" key="4">
    <source>
    </source>
</evidence>
<evidence type="ECO:0000305" key="5">
    <source>
    </source>
</evidence>
<proteinExistence type="evidence at protein level"/>
<accession>P18964</accession>